<gene>
    <name type="primary">hssl28</name>
    <name type="ORF">DDB_G0277233</name>
</gene>
<reference key="1">
    <citation type="journal article" date="2002" name="Nature">
        <title>Sequence and analysis of chromosome 2 of Dictyostelium discoideum.</title>
        <authorList>
            <person name="Gloeckner G."/>
            <person name="Eichinger L."/>
            <person name="Szafranski K."/>
            <person name="Pachebat J.A."/>
            <person name="Bankier A.T."/>
            <person name="Dear P.H."/>
            <person name="Lehmann R."/>
            <person name="Baumgart C."/>
            <person name="Parra G."/>
            <person name="Abril J.F."/>
            <person name="Guigo R."/>
            <person name="Kumpf K."/>
            <person name="Tunggal B."/>
            <person name="Cox E.C."/>
            <person name="Quail M.A."/>
            <person name="Platzer M."/>
            <person name="Rosenthal A."/>
            <person name="Noegel A.A."/>
        </authorList>
    </citation>
    <scope>NUCLEOTIDE SEQUENCE [LARGE SCALE GENOMIC DNA]</scope>
    <source>
        <strain>AX4</strain>
    </source>
</reference>
<reference key="2">
    <citation type="journal article" date="2005" name="Nature">
        <title>The genome of the social amoeba Dictyostelium discoideum.</title>
        <authorList>
            <person name="Eichinger L."/>
            <person name="Pachebat J.A."/>
            <person name="Gloeckner G."/>
            <person name="Rajandream M.A."/>
            <person name="Sucgang R."/>
            <person name="Berriman M."/>
            <person name="Song J."/>
            <person name="Olsen R."/>
            <person name="Szafranski K."/>
            <person name="Xu Q."/>
            <person name="Tunggal B."/>
            <person name="Kummerfeld S."/>
            <person name="Madera M."/>
            <person name="Konfortov B.A."/>
            <person name="Rivero F."/>
            <person name="Bankier A.T."/>
            <person name="Lehmann R."/>
            <person name="Hamlin N."/>
            <person name="Davies R."/>
            <person name="Gaudet P."/>
            <person name="Fey P."/>
            <person name="Pilcher K."/>
            <person name="Chen G."/>
            <person name="Saunders D."/>
            <person name="Sodergren E.J."/>
            <person name="Davis P."/>
            <person name="Kerhornou A."/>
            <person name="Nie X."/>
            <person name="Hall N."/>
            <person name="Anjard C."/>
            <person name="Hemphill L."/>
            <person name="Bason N."/>
            <person name="Farbrother P."/>
            <person name="Desany B."/>
            <person name="Just E."/>
            <person name="Morio T."/>
            <person name="Rost R."/>
            <person name="Churcher C.M."/>
            <person name="Cooper J."/>
            <person name="Haydock S."/>
            <person name="van Driessche N."/>
            <person name="Cronin A."/>
            <person name="Goodhead I."/>
            <person name="Muzny D.M."/>
            <person name="Mourier T."/>
            <person name="Pain A."/>
            <person name="Lu M."/>
            <person name="Harper D."/>
            <person name="Lindsay R."/>
            <person name="Hauser H."/>
            <person name="James K.D."/>
            <person name="Quiles M."/>
            <person name="Madan Babu M."/>
            <person name="Saito T."/>
            <person name="Buchrieser C."/>
            <person name="Wardroper A."/>
            <person name="Felder M."/>
            <person name="Thangavelu M."/>
            <person name="Johnson D."/>
            <person name="Knights A."/>
            <person name="Loulseged H."/>
            <person name="Mungall K.L."/>
            <person name="Oliver K."/>
            <person name="Price C."/>
            <person name="Quail M.A."/>
            <person name="Urushihara H."/>
            <person name="Hernandez J."/>
            <person name="Rabbinowitsch E."/>
            <person name="Steffen D."/>
            <person name="Sanders M."/>
            <person name="Ma J."/>
            <person name="Kohara Y."/>
            <person name="Sharp S."/>
            <person name="Simmonds M.N."/>
            <person name="Spiegler S."/>
            <person name="Tivey A."/>
            <person name="Sugano S."/>
            <person name="White B."/>
            <person name="Walker D."/>
            <person name="Woodward J.R."/>
            <person name="Winckler T."/>
            <person name="Tanaka Y."/>
            <person name="Shaulsky G."/>
            <person name="Schleicher M."/>
            <person name="Weinstock G.M."/>
            <person name="Rosenthal A."/>
            <person name="Cox E.C."/>
            <person name="Chisholm R.L."/>
            <person name="Gibbs R.A."/>
            <person name="Loomis W.F."/>
            <person name="Platzer M."/>
            <person name="Kay R.R."/>
            <person name="Williams J.G."/>
            <person name="Dear P.H."/>
            <person name="Noegel A.A."/>
            <person name="Barrell B.G."/>
            <person name="Kuspa A."/>
        </authorList>
    </citation>
    <scope>NUCLEOTIDE SEQUENCE [LARGE SCALE GENOMIC DNA]</scope>
    <source>
        <strain>AX4</strain>
    </source>
</reference>
<dbReference type="EMBL" id="AAFI02000019">
    <property type="protein sequence ID" value="EAL68802.1"/>
    <property type="molecule type" value="Genomic_DNA"/>
</dbReference>
<dbReference type="RefSeq" id="XP_642734.1">
    <property type="nucleotide sequence ID" value="XM_637642.1"/>
</dbReference>
<dbReference type="FunCoup" id="Q86K56">
    <property type="interactions" value="243"/>
</dbReference>
<dbReference type="PaxDb" id="44689-DDB0229924"/>
<dbReference type="EnsemblProtists" id="EAL68802">
    <property type="protein sequence ID" value="EAL68802"/>
    <property type="gene ID" value="DDB_G0277233"/>
</dbReference>
<dbReference type="GeneID" id="8620928"/>
<dbReference type="KEGG" id="ddi:DDB_G0277233"/>
<dbReference type="dictyBase" id="DDB_G0277233"/>
<dbReference type="HOGENOM" id="CLU_181850_1_0_1"/>
<dbReference type="InParanoid" id="Q86K56"/>
<dbReference type="PRO" id="PR:Q86K56"/>
<dbReference type="Proteomes" id="UP000002195">
    <property type="component" value="Chromosome 2"/>
</dbReference>
<dbReference type="GO" id="GO:0030587">
    <property type="term" value="P:sorocarp development"/>
    <property type="evidence" value="ECO:0000318"/>
    <property type="project" value="GO_Central"/>
</dbReference>
<dbReference type="InterPro" id="IPR050533">
    <property type="entry name" value="HssA/B-like_chaperone"/>
</dbReference>
<dbReference type="InterPro" id="IPR008455">
    <property type="entry name" value="HssA/B-related"/>
</dbReference>
<dbReference type="PANTHER" id="PTHR31059">
    <property type="entry name" value="HSSA/B-LIKE PROTEIN 1-RELATED-RELATED"/>
    <property type="match status" value="1"/>
</dbReference>
<dbReference type="PANTHER" id="PTHR31059:SF5">
    <property type="entry name" value="HSSA_B-LIKE PROTEIN 1-RELATED"/>
    <property type="match status" value="1"/>
</dbReference>
<dbReference type="Pfam" id="PF05710">
    <property type="entry name" value="Coiled"/>
    <property type="match status" value="1"/>
</dbReference>
<organism>
    <name type="scientific">Dictyostelium discoideum</name>
    <name type="common">Social amoeba</name>
    <dbReference type="NCBI Taxonomy" id="44689"/>
    <lineage>
        <taxon>Eukaryota</taxon>
        <taxon>Amoebozoa</taxon>
        <taxon>Evosea</taxon>
        <taxon>Eumycetozoa</taxon>
        <taxon>Dictyostelia</taxon>
        <taxon>Dictyosteliales</taxon>
        <taxon>Dictyosteliaceae</taxon>
        <taxon>Dictyostelium</taxon>
    </lineage>
</organism>
<accession>Q86K56</accession>
<accession>Q54ZY2</accession>
<keyword id="KW-1185">Reference proteome</keyword>
<proteinExistence type="inferred from homology"/>
<protein>
    <recommendedName>
        <fullName>HssA/B-like protein 28</fullName>
    </recommendedName>
</protein>
<evidence type="ECO:0000305" key="1"/>
<feature type="chain" id="PRO_0000330397" description="HssA/B-like protein 28">
    <location>
        <begin position="1"/>
        <end position="87"/>
    </location>
</feature>
<name>HSL28_DICDI</name>
<comment type="similarity">
    <text evidence="1">Belongs to the hssA/B family.</text>
</comment>
<sequence>MTILSAITSITRPNKISKSVVSSNGGASLSLSSNSVACATACGGSSYSYSSSYSSSGLGYSYNSSYSSSVGYSSSVGVVIGSCGHCS</sequence>